<name>EMP24_SCHPO</name>
<protein>
    <recommendedName>
        <fullName>Endosomal protein P24B</fullName>
    </recommendedName>
</protein>
<feature type="signal peptide" evidence="2">
    <location>
        <begin position="1"/>
        <end position="21"/>
    </location>
</feature>
<feature type="chain" id="PRO_0000316579" description="Endosomal protein P24B">
    <location>
        <begin position="22"/>
        <end position="199"/>
    </location>
</feature>
<feature type="topological domain" description="Lumenal" evidence="2">
    <location>
        <begin position="22"/>
        <end position="168"/>
    </location>
</feature>
<feature type="transmembrane region" description="Helical" evidence="2">
    <location>
        <begin position="169"/>
        <end position="189"/>
    </location>
</feature>
<feature type="topological domain" description="Cytoplasmic" evidence="2">
    <location>
        <begin position="190"/>
        <end position="199"/>
    </location>
</feature>
<feature type="domain" description="GOLD" evidence="3">
    <location>
        <begin position="31"/>
        <end position="113"/>
    </location>
</feature>
<evidence type="ECO:0000250" key="1"/>
<evidence type="ECO:0000255" key="2"/>
<evidence type="ECO:0000255" key="3">
    <source>
        <dbReference type="PROSITE-ProRule" id="PRU00096"/>
    </source>
</evidence>
<evidence type="ECO:0000269" key="4">
    <source>
    </source>
</evidence>
<evidence type="ECO:0000305" key="5"/>
<comment type="function">
    <text evidence="1">Constituent of COPII-coated endoplasmic reticulum-derived transport vesicles. Required for efficient transport of a subset of secretory proteins to the Golgi (By similarity).</text>
</comment>
<comment type="subcellular location">
    <subcellularLocation>
        <location evidence="4">Endoplasmic reticulum membrane</location>
        <topology evidence="4">Single-pass type I membrane protein</topology>
    </subcellularLocation>
    <subcellularLocation>
        <location evidence="1">Golgi apparatus membrane</location>
        <topology evidence="1">Single-pass type I membrane protein</topology>
    </subcellularLocation>
    <text evidence="1">Recycles between endoplasmic reticulum and Golgi.</text>
</comment>
<comment type="similarity">
    <text evidence="5">Belongs to the EMP24/GP25L family.</text>
</comment>
<gene>
    <name type="primary">emp24</name>
    <name type="ORF">SPCC24B10.17</name>
</gene>
<dbReference type="EMBL" id="CU329672">
    <property type="protein sequence ID" value="CAB76226.1"/>
    <property type="molecule type" value="Genomic_DNA"/>
</dbReference>
<dbReference type="PIR" id="T50424">
    <property type="entry name" value="T50424"/>
</dbReference>
<dbReference type="RefSeq" id="NP_588020.1">
    <property type="nucleotide sequence ID" value="NM_001023011.2"/>
</dbReference>
<dbReference type="SMR" id="Q9P7I9"/>
<dbReference type="BioGRID" id="275916">
    <property type="interactions" value="10"/>
</dbReference>
<dbReference type="FunCoup" id="Q9P7I9">
    <property type="interactions" value="788"/>
</dbReference>
<dbReference type="STRING" id="284812.Q9P7I9"/>
<dbReference type="PaxDb" id="4896-SPCC24B10.17.1"/>
<dbReference type="EnsemblFungi" id="SPCC24B10.17.1">
    <property type="protein sequence ID" value="SPCC24B10.17.1:pep"/>
    <property type="gene ID" value="SPCC24B10.17"/>
</dbReference>
<dbReference type="GeneID" id="2539350"/>
<dbReference type="KEGG" id="spo:2539350"/>
<dbReference type="PomBase" id="SPCC24B10.17">
    <property type="gene designation" value="emp24"/>
</dbReference>
<dbReference type="VEuPathDB" id="FungiDB:SPCC24B10.17"/>
<dbReference type="eggNOG" id="KOG1692">
    <property type="taxonomic scope" value="Eukaryota"/>
</dbReference>
<dbReference type="HOGENOM" id="CLU_066963_4_0_1"/>
<dbReference type="InParanoid" id="Q9P7I9"/>
<dbReference type="OMA" id="MQVRDRN"/>
<dbReference type="PhylomeDB" id="Q9P7I9"/>
<dbReference type="Reactome" id="R-SPO-6807878">
    <property type="pathway name" value="COPI-mediated anterograde transport"/>
</dbReference>
<dbReference type="Reactome" id="R-SPO-6811434">
    <property type="pathway name" value="COPI-dependent Golgi-to-ER retrograde traffic"/>
</dbReference>
<dbReference type="PRO" id="PR:Q9P7I9"/>
<dbReference type="Proteomes" id="UP000002485">
    <property type="component" value="Chromosome III"/>
</dbReference>
<dbReference type="GO" id="GO:0030134">
    <property type="term" value="C:COPII-coated ER to Golgi transport vesicle"/>
    <property type="evidence" value="ECO:0000318"/>
    <property type="project" value="GO_Central"/>
</dbReference>
<dbReference type="GO" id="GO:0005783">
    <property type="term" value="C:endoplasmic reticulum"/>
    <property type="evidence" value="ECO:0007005"/>
    <property type="project" value="PomBase"/>
</dbReference>
<dbReference type="GO" id="GO:0005789">
    <property type="term" value="C:endoplasmic reticulum membrane"/>
    <property type="evidence" value="ECO:0007669"/>
    <property type="project" value="UniProtKB-SubCell"/>
</dbReference>
<dbReference type="GO" id="GO:0005793">
    <property type="term" value="C:endoplasmic reticulum-Golgi intermediate compartment"/>
    <property type="evidence" value="ECO:0000318"/>
    <property type="project" value="GO_Central"/>
</dbReference>
<dbReference type="GO" id="GO:0005794">
    <property type="term" value="C:Golgi apparatus"/>
    <property type="evidence" value="ECO:0000318"/>
    <property type="project" value="GO_Central"/>
</dbReference>
<dbReference type="GO" id="GO:0000139">
    <property type="term" value="C:Golgi membrane"/>
    <property type="evidence" value="ECO:0007669"/>
    <property type="project" value="UniProtKB-SubCell"/>
</dbReference>
<dbReference type="GO" id="GO:0006888">
    <property type="term" value="P:endoplasmic reticulum to Golgi vesicle-mediated transport"/>
    <property type="evidence" value="ECO:0000318"/>
    <property type="project" value="GO_Central"/>
</dbReference>
<dbReference type="GO" id="GO:0007030">
    <property type="term" value="P:Golgi organization"/>
    <property type="evidence" value="ECO:0000318"/>
    <property type="project" value="GO_Central"/>
</dbReference>
<dbReference type="GO" id="GO:0006886">
    <property type="term" value="P:intracellular protein transport"/>
    <property type="evidence" value="ECO:0000318"/>
    <property type="project" value="GO_Central"/>
</dbReference>
<dbReference type="GO" id="GO:0006621">
    <property type="term" value="P:protein retention in ER lumen"/>
    <property type="evidence" value="ECO:0000318"/>
    <property type="project" value="GO_Central"/>
</dbReference>
<dbReference type="InterPro" id="IPR015720">
    <property type="entry name" value="Emp24-like"/>
</dbReference>
<dbReference type="InterPro" id="IPR009038">
    <property type="entry name" value="GOLD_dom"/>
</dbReference>
<dbReference type="InterPro" id="IPR036598">
    <property type="entry name" value="GOLD_dom_sf"/>
</dbReference>
<dbReference type="PANTHER" id="PTHR22811">
    <property type="entry name" value="TRANSMEMBRANE EMP24 DOMAIN-CONTAINING PROTEIN"/>
    <property type="match status" value="1"/>
</dbReference>
<dbReference type="Pfam" id="PF01105">
    <property type="entry name" value="EMP24_GP25L"/>
    <property type="match status" value="1"/>
</dbReference>
<dbReference type="SMART" id="SM01190">
    <property type="entry name" value="EMP24_GP25L"/>
    <property type="match status" value="1"/>
</dbReference>
<dbReference type="SUPFAM" id="SSF101576">
    <property type="entry name" value="Supernatant protein factor (SPF), C-terminal domain"/>
    <property type="match status" value="1"/>
</dbReference>
<dbReference type="PROSITE" id="PS50866">
    <property type="entry name" value="GOLD"/>
    <property type="match status" value="1"/>
</dbReference>
<proteinExistence type="inferred from homology"/>
<accession>Q9P7I9</accession>
<keyword id="KW-0256">Endoplasmic reticulum</keyword>
<keyword id="KW-0931">ER-Golgi transport</keyword>
<keyword id="KW-0333">Golgi apparatus</keyword>
<keyword id="KW-0472">Membrane</keyword>
<keyword id="KW-0653">Protein transport</keyword>
<keyword id="KW-1185">Reference proteome</keyword>
<keyword id="KW-0732">Signal</keyword>
<keyword id="KW-0812">Transmembrane</keyword>
<keyword id="KW-1133">Transmembrane helix</keyword>
<keyword id="KW-0813">Transport</keyword>
<organism>
    <name type="scientific">Schizosaccharomyces pombe (strain 972 / ATCC 24843)</name>
    <name type="common">Fission yeast</name>
    <dbReference type="NCBI Taxonomy" id="284812"/>
    <lineage>
        <taxon>Eukaryota</taxon>
        <taxon>Fungi</taxon>
        <taxon>Dikarya</taxon>
        <taxon>Ascomycota</taxon>
        <taxon>Taphrinomycotina</taxon>
        <taxon>Schizosaccharomycetes</taxon>
        <taxon>Schizosaccharomycetales</taxon>
        <taxon>Schizosaccharomycetaceae</taxon>
        <taxon>Schizosaccharomyces</taxon>
    </lineage>
</organism>
<sequence>MAFFNVFKAVLCAYFISVVFGHGITLKPHQRECFYENLRNNDQMSVTYQTNVGGDQLVSMSIYNPAGQIMHQEVPNSMAQYSFTVKNPGKYMYCFYNDALDGESKEVLFNVHGVIYISDEDLDANNPLLGKVRQLHDTISKVKHEQEYFVARERIHRNTAESTNDRVKWWSILQTVILVSVCVFQIFYLKRLFEVKRVV</sequence>
<reference key="1">
    <citation type="journal article" date="2002" name="Nature">
        <title>The genome sequence of Schizosaccharomyces pombe.</title>
        <authorList>
            <person name="Wood V."/>
            <person name="Gwilliam R."/>
            <person name="Rajandream M.A."/>
            <person name="Lyne M.H."/>
            <person name="Lyne R."/>
            <person name="Stewart A."/>
            <person name="Sgouros J.G."/>
            <person name="Peat N."/>
            <person name="Hayles J."/>
            <person name="Baker S.G."/>
            <person name="Basham D."/>
            <person name="Bowman S."/>
            <person name="Brooks K."/>
            <person name="Brown D."/>
            <person name="Brown S."/>
            <person name="Chillingworth T."/>
            <person name="Churcher C.M."/>
            <person name="Collins M."/>
            <person name="Connor R."/>
            <person name="Cronin A."/>
            <person name="Davis P."/>
            <person name="Feltwell T."/>
            <person name="Fraser A."/>
            <person name="Gentles S."/>
            <person name="Goble A."/>
            <person name="Hamlin N."/>
            <person name="Harris D.E."/>
            <person name="Hidalgo J."/>
            <person name="Hodgson G."/>
            <person name="Holroyd S."/>
            <person name="Hornsby T."/>
            <person name="Howarth S."/>
            <person name="Huckle E.J."/>
            <person name="Hunt S."/>
            <person name="Jagels K."/>
            <person name="James K.D."/>
            <person name="Jones L."/>
            <person name="Jones M."/>
            <person name="Leather S."/>
            <person name="McDonald S."/>
            <person name="McLean J."/>
            <person name="Mooney P."/>
            <person name="Moule S."/>
            <person name="Mungall K.L."/>
            <person name="Murphy L.D."/>
            <person name="Niblett D."/>
            <person name="Odell C."/>
            <person name="Oliver K."/>
            <person name="O'Neil S."/>
            <person name="Pearson D."/>
            <person name="Quail M.A."/>
            <person name="Rabbinowitsch E."/>
            <person name="Rutherford K.M."/>
            <person name="Rutter S."/>
            <person name="Saunders D."/>
            <person name="Seeger K."/>
            <person name="Sharp S."/>
            <person name="Skelton J."/>
            <person name="Simmonds M.N."/>
            <person name="Squares R."/>
            <person name="Squares S."/>
            <person name="Stevens K."/>
            <person name="Taylor K."/>
            <person name="Taylor R.G."/>
            <person name="Tivey A."/>
            <person name="Walsh S.V."/>
            <person name="Warren T."/>
            <person name="Whitehead S."/>
            <person name="Woodward J.R."/>
            <person name="Volckaert G."/>
            <person name="Aert R."/>
            <person name="Robben J."/>
            <person name="Grymonprez B."/>
            <person name="Weltjens I."/>
            <person name="Vanstreels E."/>
            <person name="Rieger M."/>
            <person name="Schaefer M."/>
            <person name="Mueller-Auer S."/>
            <person name="Gabel C."/>
            <person name="Fuchs M."/>
            <person name="Duesterhoeft A."/>
            <person name="Fritzc C."/>
            <person name="Holzer E."/>
            <person name="Moestl D."/>
            <person name="Hilbert H."/>
            <person name="Borzym K."/>
            <person name="Langer I."/>
            <person name="Beck A."/>
            <person name="Lehrach H."/>
            <person name="Reinhardt R."/>
            <person name="Pohl T.M."/>
            <person name="Eger P."/>
            <person name="Zimmermann W."/>
            <person name="Wedler H."/>
            <person name="Wambutt R."/>
            <person name="Purnelle B."/>
            <person name="Goffeau A."/>
            <person name="Cadieu E."/>
            <person name="Dreano S."/>
            <person name="Gloux S."/>
            <person name="Lelaure V."/>
            <person name="Mottier S."/>
            <person name="Galibert F."/>
            <person name="Aves S.J."/>
            <person name="Xiang Z."/>
            <person name="Hunt C."/>
            <person name="Moore K."/>
            <person name="Hurst S.M."/>
            <person name="Lucas M."/>
            <person name="Rochet M."/>
            <person name="Gaillardin C."/>
            <person name="Tallada V.A."/>
            <person name="Garzon A."/>
            <person name="Thode G."/>
            <person name="Daga R.R."/>
            <person name="Cruzado L."/>
            <person name="Jimenez J."/>
            <person name="Sanchez M."/>
            <person name="del Rey F."/>
            <person name="Benito J."/>
            <person name="Dominguez A."/>
            <person name="Revuelta J.L."/>
            <person name="Moreno S."/>
            <person name="Armstrong J."/>
            <person name="Forsburg S.L."/>
            <person name="Cerutti L."/>
            <person name="Lowe T."/>
            <person name="McCombie W.R."/>
            <person name="Paulsen I."/>
            <person name="Potashkin J."/>
            <person name="Shpakovski G.V."/>
            <person name="Ussery D."/>
            <person name="Barrell B.G."/>
            <person name="Nurse P."/>
        </authorList>
    </citation>
    <scope>NUCLEOTIDE SEQUENCE [LARGE SCALE GENOMIC DNA]</scope>
    <source>
        <strain>972 / ATCC 24843</strain>
    </source>
</reference>
<reference key="2">
    <citation type="journal article" date="2006" name="Nat. Biotechnol.">
        <title>ORFeome cloning and global analysis of protein localization in the fission yeast Schizosaccharomyces pombe.</title>
        <authorList>
            <person name="Matsuyama A."/>
            <person name="Arai R."/>
            <person name="Yashiroda Y."/>
            <person name="Shirai A."/>
            <person name="Kamata A."/>
            <person name="Sekido S."/>
            <person name="Kobayashi Y."/>
            <person name="Hashimoto A."/>
            <person name="Hamamoto M."/>
            <person name="Hiraoka Y."/>
            <person name="Horinouchi S."/>
            <person name="Yoshida M."/>
        </authorList>
    </citation>
    <scope>SUBCELLULAR LOCATION [LARGE SCALE ANALYSIS]</scope>
</reference>